<feature type="initiator methionine" description="Removed" evidence="3">
    <location>
        <position position="1"/>
    </location>
</feature>
<feature type="chain" id="PRO_0000077288" description="Type II restriction enzyme BsoBI">
    <location>
        <begin position="2"/>
        <end position="323"/>
    </location>
</feature>
<feature type="binding site" evidence="1">
    <location>
        <position position="212"/>
    </location>
    <ligand>
        <name>Mg(2+)</name>
        <dbReference type="ChEBI" id="CHEBI:18420"/>
        <note>catalytic</note>
    </ligand>
</feature>
<feature type="binding site" evidence="1">
    <location>
        <position position="240"/>
    </location>
    <ligand>
        <name>Mg(2+)</name>
        <dbReference type="ChEBI" id="CHEBI:18420"/>
        <note>catalytic</note>
    </ligand>
</feature>
<feature type="binding site" evidence="1">
    <location>
        <position position="242"/>
    </location>
    <ligand>
        <name>Mg(2+)</name>
        <dbReference type="ChEBI" id="CHEBI:18420"/>
        <note>catalytic</note>
    </ligand>
</feature>
<feature type="site" description="Interaction with DNA">
    <location>
        <position position="81"/>
    </location>
</feature>
<feature type="site" description="Interaction with DNA">
    <location>
        <position position="131"/>
    </location>
</feature>
<feature type="mutagenesis site" description="Loss of activity, still binds DNA." evidence="4">
    <original>D</original>
    <variation>N</variation>
    <location>
        <position position="212"/>
    </location>
</feature>
<feature type="mutagenesis site" description="Loss of activity, still binds DNA." evidence="4">
    <original>D</original>
    <variation>N</variation>
    <location>
        <position position="246"/>
    </location>
</feature>
<feature type="helix" evidence="8">
    <location>
        <begin position="6"/>
        <end position="9"/>
    </location>
</feature>
<feature type="helix" evidence="8">
    <location>
        <begin position="14"/>
        <end position="17"/>
    </location>
</feature>
<feature type="helix" evidence="8">
    <location>
        <begin position="21"/>
        <end position="53"/>
    </location>
</feature>
<feature type="helix" evidence="8">
    <location>
        <begin position="59"/>
        <end position="64"/>
    </location>
</feature>
<feature type="helix" evidence="8">
    <location>
        <begin position="66"/>
        <end position="68"/>
    </location>
</feature>
<feature type="helix" evidence="8">
    <location>
        <begin position="69"/>
        <end position="75"/>
    </location>
</feature>
<feature type="helix" evidence="8">
    <location>
        <begin position="80"/>
        <end position="83"/>
    </location>
</feature>
<feature type="helix" evidence="8">
    <location>
        <begin position="88"/>
        <end position="101"/>
    </location>
</feature>
<feature type="turn" evidence="8">
    <location>
        <begin position="102"/>
        <end position="106"/>
    </location>
</feature>
<feature type="helix" evidence="8">
    <location>
        <begin position="107"/>
        <end position="109"/>
    </location>
</feature>
<feature type="helix" evidence="8">
    <location>
        <begin position="110"/>
        <end position="152"/>
    </location>
</feature>
<feature type="strand" evidence="8">
    <location>
        <begin position="157"/>
        <end position="161"/>
    </location>
</feature>
<feature type="strand" evidence="8">
    <location>
        <begin position="170"/>
        <end position="172"/>
    </location>
</feature>
<feature type="helix" evidence="8">
    <location>
        <begin position="180"/>
        <end position="183"/>
    </location>
</feature>
<feature type="strand" evidence="8">
    <location>
        <begin position="184"/>
        <end position="191"/>
    </location>
</feature>
<feature type="strand" evidence="8">
    <location>
        <begin position="194"/>
        <end position="204"/>
    </location>
</feature>
<feature type="turn" evidence="8">
    <location>
        <begin position="205"/>
        <end position="208"/>
    </location>
</feature>
<feature type="strand" evidence="8">
    <location>
        <begin position="209"/>
        <end position="218"/>
    </location>
</feature>
<feature type="helix" evidence="8">
    <location>
        <begin position="232"/>
        <end position="234"/>
    </location>
</feature>
<feature type="strand" evidence="8">
    <location>
        <begin position="235"/>
        <end position="242"/>
    </location>
</feature>
<feature type="helix" evidence="8">
    <location>
        <begin position="247"/>
        <end position="270"/>
    </location>
</feature>
<feature type="strand" evidence="8">
    <location>
        <begin position="276"/>
        <end position="283"/>
    </location>
</feature>
<feature type="helix" evidence="8">
    <location>
        <begin position="286"/>
        <end position="297"/>
    </location>
</feature>
<feature type="strand" evidence="8">
    <location>
        <begin position="303"/>
        <end position="306"/>
    </location>
</feature>
<feature type="helix" evidence="8">
    <location>
        <begin position="310"/>
        <end position="321"/>
    </location>
</feature>
<accession>P70985</accession>
<reference key="1">
    <citation type="journal article" date="1996" name="Mol. Gen. Genet.">
        <title>Cloning and sequence comparison of AvaI and BsoBI restriction-modification systems.</title>
        <authorList>
            <person name="Ruan H."/>
            <person name="Lunnen K.D."/>
            <person name="Scott M.E."/>
            <person name="Moran L.S."/>
            <person name="Slatko B.E."/>
            <person name="Pelletier J.J."/>
            <person name="Hess E.J."/>
            <person name="Benner J. II"/>
            <person name="Wilson G.G."/>
            <person name="Xu S.-Y."/>
        </authorList>
    </citation>
    <scope>NUCLEOTIDE SEQUENCE [GENOMIC DNA]</scope>
    <scope>PROTEIN SEQUENCE OF 2-17</scope>
    <scope>FUNCTION</scope>
    <source>
        <strain>JN209</strain>
    </source>
</reference>
<reference key="2">
    <citation type="journal article" date="1997" name="Gene">
        <title>Overexpression of BsoBI restriction endonuclease in E. coli, purification of the recombinant BsoBI, and identification of catalytic residues of BsoBI by random mutagenesis.</title>
        <authorList>
            <person name="Ruan H."/>
            <person name="Lunnen K.D."/>
            <person name="Pelletier J.J."/>
            <person name="Xu S.-Y."/>
        </authorList>
    </citation>
    <scope>FUNCTION</scope>
    <scope>MUTAGENESIS OF ASP-212 AND ASP-246</scope>
    <scope>DNA-BINDING</scope>
    <source>
        <strain>JN209</strain>
    </source>
</reference>
<reference key="3">
    <citation type="journal article" date="2003" name="Nucleic Acids Res.">
        <title>A nomenclature for restriction enzymes, DNA methyltransferases, homing endonucleases and their genes.</title>
        <authorList>
            <person name="Roberts R.J."/>
            <person name="Belfort M."/>
            <person name="Bestor T."/>
            <person name="Bhagwat A.S."/>
            <person name="Bickle T.A."/>
            <person name="Bitinaite J."/>
            <person name="Blumenthal R.M."/>
            <person name="Degtyarev S.K."/>
            <person name="Dryden D.T."/>
            <person name="Dybvig K."/>
            <person name="Firman K."/>
            <person name="Gromova E.S."/>
            <person name="Gumport R.I."/>
            <person name="Halford S.E."/>
            <person name="Hattman S."/>
            <person name="Heitman J."/>
            <person name="Hornby D.P."/>
            <person name="Janulaitis A."/>
            <person name="Jeltsch A."/>
            <person name="Josephsen J."/>
            <person name="Kiss A."/>
            <person name="Klaenhammer T.R."/>
            <person name="Kobayashi I."/>
            <person name="Kong H."/>
            <person name="Krueger D.H."/>
            <person name="Lacks S."/>
            <person name="Marinus M.G."/>
            <person name="Miyahara M."/>
            <person name="Morgan R.D."/>
            <person name="Murray N.E."/>
            <person name="Nagaraja V."/>
            <person name="Piekarowicz A."/>
            <person name="Pingoud A."/>
            <person name="Raleigh E."/>
            <person name="Rao D.N."/>
            <person name="Reich N."/>
            <person name="Repin V.E."/>
            <person name="Selker E.U."/>
            <person name="Shaw P.C."/>
            <person name="Stein D.C."/>
            <person name="Stoddard B.L."/>
            <person name="Szybalski W."/>
            <person name="Trautner T.A."/>
            <person name="Van Etten J.L."/>
            <person name="Vitor J.M."/>
            <person name="Wilson G.G."/>
            <person name="Xu S.Y."/>
        </authorList>
    </citation>
    <scope>NOMENCLATURE</scope>
    <scope>SUBTYPE</scope>
</reference>
<reference key="4">
    <citation type="journal article" date="2001" name="Structure">
        <title>Restriction enzyme BsoBI-DNA complex: a tunnel for recognition of degenerate DNA sequences and potential histidine catalysis.</title>
        <authorList>
            <person name="van der Woerd M.J."/>
            <person name="Pelletier J.J."/>
            <person name="Xu S.-Y."/>
            <person name="Friedman A.M."/>
        </authorList>
    </citation>
    <scope>X-RAY CRYSTALLOGRAPHY (1.7 ANGSTROMS) IN COMPLEX WITH DNA</scope>
    <scope>SUBUNIT</scope>
</reference>
<gene>
    <name evidence="6" type="primary">bsoBIR</name>
</gene>
<dbReference type="EC" id="3.1.21.4"/>
<dbReference type="EMBL" id="X98287">
    <property type="protein sequence ID" value="CAA66932.1"/>
    <property type="molecule type" value="Genomic_DNA"/>
</dbReference>
<dbReference type="PIR" id="S72473">
    <property type="entry name" value="S72473"/>
</dbReference>
<dbReference type="PDB" id="1DC1">
    <property type="method" value="X-ray"/>
    <property type="resolution" value="1.70 A"/>
    <property type="chains" value="A/B=1-323"/>
</dbReference>
<dbReference type="PDBsum" id="1DC1"/>
<dbReference type="SMR" id="P70985"/>
<dbReference type="EvolutionaryTrace" id="P70985"/>
<dbReference type="PRO" id="PR:P70985"/>
<dbReference type="GO" id="GO:0003677">
    <property type="term" value="F:DNA binding"/>
    <property type="evidence" value="ECO:0007669"/>
    <property type="project" value="UniProtKB-KW"/>
</dbReference>
<dbReference type="GO" id="GO:0046872">
    <property type="term" value="F:metal ion binding"/>
    <property type="evidence" value="ECO:0007669"/>
    <property type="project" value="UniProtKB-KW"/>
</dbReference>
<dbReference type="GO" id="GO:0009036">
    <property type="term" value="F:type II site-specific deoxyribonuclease activity"/>
    <property type="evidence" value="ECO:0007669"/>
    <property type="project" value="UniProtKB-EC"/>
</dbReference>
<dbReference type="GO" id="GO:0009307">
    <property type="term" value="P:DNA restriction-modification system"/>
    <property type="evidence" value="ECO:0007669"/>
    <property type="project" value="UniProtKB-KW"/>
</dbReference>
<dbReference type="CDD" id="cd22315">
    <property type="entry name" value="BsoBI-like"/>
    <property type="match status" value="1"/>
</dbReference>
<dbReference type="Gene3D" id="3.40.91.10">
    <property type="match status" value="1"/>
</dbReference>
<dbReference type="Gene3D" id="1.10.238.90">
    <property type="entry name" value="Restriction endonuclease BsobI, helical domain"/>
    <property type="match status" value="1"/>
</dbReference>
<dbReference type="InterPro" id="IPR043091">
    <property type="entry name" value="Restr_endonucII_AvaI/BsoBI_hel"/>
</dbReference>
<dbReference type="InterPro" id="IPR011335">
    <property type="entry name" value="Restrct_endonuc-II-like"/>
</dbReference>
<dbReference type="InterPro" id="IPR015277">
    <property type="entry name" value="Restrct_endonuc_II_AvaI/BsoBI"/>
</dbReference>
<dbReference type="Pfam" id="PF09194">
    <property type="entry name" value="Endonuc-BsobI"/>
    <property type="match status" value="1"/>
</dbReference>
<dbReference type="SUPFAM" id="SSF52980">
    <property type="entry name" value="Restriction endonuclease-like"/>
    <property type="match status" value="1"/>
</dbReference>
<comment type="function">
    <text evidence="4 5 7">A P subtype restriction enzyme that recognizes the double-stranded sequence 5'-CYCGRG-3' and cleaves after C-1.</text>
</comment>
<comment type="catalytic activity">
    <reaction>
        <text>Endonucleolytic cleavage of DNA to give specific double-stranded fragments with terminal 5'-phosphates.</text>
        <dbReference type="EC" id="3.1.21.4"/>
    </reaction>
</comment>
<comment type="subunit">
    <text evidence="2">Homodimer.</text>
</comment>
<organism>
    <name type="scientific">Geobacillus stearothermophilus</name>
    <name type="common">Bacillus stearothermophilus</name>
    <dbReference type="NCBI Taxonomy" id="1422"/>
    <lineage>
        <taxon>Bacteria</taxon>
        <taxon>Bacillati</taxon>
        <taxon>Bacillota</taxon>
        <taxon>Bacilli</taxon>
        <taxon>Bacillales</taxon>
        <taxon>Anoxybacillaceae</taxon>
        <taxon>Geobacillus</taxon>
    </lineage>
</organism>
<evidence type="ECO:0000255" key="1"/>
<evidence type="ECO:0000269" key="2">
    <source>
    </source>
</evidence>
<evidence type="ECO:0000269" key="3">
    <source>
    </source>
</evidence>
<evidence type="ECO:0000269" key="4">
    <source>
    </source>
</evidence>
<evidence type="ECO:0000303" key="5">
    <source>
    </source>
</evidence>
<evidence type="ECO:0000303" key="6">
    <source>
    </source>
</evidence>
<evidence type="ECO:0000305" key="7">
    <source>
    </source>
</evidence>
<evidence type="ECO:0007829" key="8">
    <source>
        <dbReference type="PDB" id="1DC1"/>
    </source>
</evidence>
<proteinExistence type="evidence at protein level"/>
<name>T2B1_GEOSE</name>
<keyword id="KW-0002">3D-structure</keyword>
<keyword id="KW-0903">Direct protein sequencing</keyword>
<keyword id="KW-0238">DNA-binding</keyword>
<keyword id="KW-0255">Endonuclease</keyword>
<keyword id="KW-0378">Hydrolase</keyword>
<keyword id="KW-0460">Magnesium</keyword>
<keyword id="KW-0479">Metal-binding</keyword>
<keyword id="KW-0540">Nuclease</keyword>
<keyword id="KW-0680">Restriction system</keyword>
<sequence>MNTQKPFENHLKSVDDLKTTYEEYRAGFIAFALEKNKRSTPYIERARALKVAASVAKTPKDLLYLEDIQDALLYASGISDKAKKFLTEDDKKESINNLIENFLEPAGEEFIDELIFRYLLFQGDSLGGTMRNIAGALAQQKLTRAIISALDIANIPYKWLDSRDKKYTNWMDKPEDDYELETFAKGISWTINGKHRTLMYNITVPLVKKNVDICLFNCEPEIYTPQKVHQQPEKYLLLGELKGGIDPAGADEHWKTANTALTRIRNKFSEKGLSPKTIFIGAAIEHSMAEEIWDQLQSGSLTNSANLTKTEQVGSLCRWIINI</sequence>
<protein>
    <recommendedName>
        <fullName evidence="5">Type II restriction enzyme BsoBI</fullName>
        <shortName>R.BsoBI</shortName>
        <ecNumber>3.1.21.4</ecNumber>
    </recommendedName>
    <alternativeName>
        <fullName>Endonuclease BsoBI</fullName>
    </alternativeName>
    <alternativeName>
        <fullName>Type-2 restriction enzyme BsoBI</fullName>
    </alternativeName>
</protein>